<feature type="chain" id="PRO_0000151013" description="ORC1-type DNA replication protein">
    <location>
        <begin position="1"/>
        <end position="419"/>
    </location>
</feature>
<feature type="binding site" evidence="1">
    <location>
        <begin position="72"/>
        <end position="76"/>
    </location>
    <ligand>
        <name>ATP</name>
        <dbReference type="ChEBI" id="CHEBI:30616"/>
    </ligand>
</feature>
<feature type="binding site" evidence="1">
    <location>
        <position position="220"/>
    </location>
    <ligand>
        <name>ATP</name>
        <dbReference type="ChEBI" id="CHEBI:30616"/>
    </ligand>
</feature>
<feature type="binding site" evidence="1">
    <location>
        <position position="232"/>
    </location>
    <ligand>
        <name>ATP</name>
        <dbReference type="ChEBI" id="CHEBI:30616"/>
    </ligand>
</feature>
<reference key="1">
    <citation type="journal article" date="1998" name="DNA Res.">
        <title>Complete sequence and gene organization of the genome of a hyper-thermophilic archaebacterium, Pyrococcus horikoshii OT3.</title>
        <authorList>
            <person name="Kawarabayasi Y."/>
            <person name="Sawada M."/>
            <person name="Horikawa H."/>
            <person name="Haikawa Y."/>
            <person name="Hino Y."/>
            <person name="Yamamoto S."/>
            <person name="Sekine M."/>
            <person name="Baba S."/>
            <person name="Kosugi H."/>
            <person name="Hosoyama A."/>
            <person name="Nagai Y."/>
            <person name="Sakai M."/>
            <person name="Ogura K."/>
            <person name="Otsuka R."/>
            <person name="Nakazawa H."/>
            <person name="Takamiya M."/>
            <person name="Ohfuku Y."/>
            <person name="Funahashi T."/>
            <person name="Tanaka T."/>
            <person name="Kudoh Y."/>
            <person name="Yamazaki J."/>
            <person name="Kushida N."/>
            <person name="Oguchi A."/>
            <person name="Aoki K."/>
            <person name="Yoshizawa T."/>
            <person name="Nakamura Y."/>
            <person name="Robb F.T."/>
            <person name="Horikoshi K."/>
            <person name="Masuchi Y."/>
            <person name="Shizuya H."/>
            <person name="Kikuchi H."/>
        </authorList>
    </citation>
    <scope>NUCLEOTIDE SEQUENCE [LARGE SCALE GENOMIC DNA]</scope>
    <source>
        <strain>ATCC 700860 / DSM 12428 / JCM 9974 / NBRC 100139 / OT-3</strain>
    </source>
</reference>
<accession>O57864</accession>
<gene>
    <name type="primary">cdc6</name>
    <name type="ordered locus">PH0124</name>
</gene>
<proteinExistence type="inferred from homology"/>
<evidence type="ECO:0000255" key="1">
    <source>
        <dbReference type="HAMAP-Rule" id="MF_01407"/>
    </source>
</evidence>
<evidence type="ECO:0000305" key="2"/>
<dbReference type="EMBL" id="BA000001">
    <property type="protein sequence ID" value="BAA29193.1"/>
    <property type="status" value="ALT_INIT"/>
    <property type="molecule type" value="Genomic_DNA"/>
</dbReference>
<dbReference type="PIR" id="B71233">
    <property type="entry name" value="B71233"/>
</dbReference>
<dbReference type="RefSeq" id="WP_048053038.1">
    <property type="nucleotide sequence ID" value="NC_000961.1"/>
</dbReference>
<dbReference type="SMR" id="O57864"/>
<dbReference type="STRING" id="70601.gene:9377032"/>
<dbReference type="EnsemblBacteria" id="BAA29193">
    <property type="protein sequence ID" value="BAA29193"/>
    <property type="gene ID" value="BAA29193"/>
</dbReference>
<dbReference type="GeneID" id="1444020"/>
<dbReference type="KEGG" id="pho:PH0124"/>
<dbReference type="eggNOG" id="arCOG00467">
    <property type="taxonomic scope" value="Archaea"/>
</dbReference>
<dbReference type="OrthoDB" id="195574at2157"/>
<dbReference type="Proteomes" id="UP000000752">
    <property type="component" value="Chromosome"/>
</dbReference>
<dbReference type="GO" id="GO:0005524">
    <property type="term" value="F:ATP binding"/>
    <property type="evidence" value="ECO:0007669"/>
    <property type="project" value="UniProtKB-UniRule"/>
</dbReference>
<dbReference type="GO" id="GO:0016887">
    <property type="term" value="F:ATP hydrolysis activity"/>
    <property type="evidence" value="ECO:0007669"/>
    <property type="project" value="InterPro"/>
</dbReference>
<dbReference type="GO" id="GO:0006260">
    <property type="term" value="P:DNA replication"/>
    <property type="evidence" value="ECO:0007669"/>
    <property type="project" value="UniProtKB-UniRule"/>
</dbReference>
<dbReference type="CDD" id="cd00009">
    <property type="entry name" value="AAA"/>
    <property type="match status" value="1"/>
</dbReference>
<dbReference type="CDD" id="cd08768">
    <property type="entry name" value="Cdc6_C"/>
    <property type="match status" value="1"/>
</dbReference>
<dbReference type="CDD" id="cd18139">
    <property type="entry name" value="HLD_clamp_RarA"/>
    <property type="match status" value="1"/>
</dbReference>
<dbReference type="FunFam" id="1.10.8.60:FF:000073">
    <property type="entry name" value="ORC1-type DNA replication protein"/>
    <property type="match status" value="1"/>
</dbReference>
<dbReference type="FunFam" id="3.40.50.300:FF:000930">
    <property type="entry name" value="ORC1-type DNA replication protein"/>
    <property type="match status" value="1"/>
</dbReference>
<dbReference type="Gene3D" id="1.10.8.60">
    <property type="match status" value="1"/>
</dbReference>
<dbReference type="Gene3D" id="3.40.50.300">
    <property type="entry name" value="P-loop containing nucleotide triphosphate hydrolases"/>
    <property type="match status" value="1"/>
</dbReference>
<dbReference type="Gene3D" id="1.10.10.10">
    <property type="entry name" value="Winged helix-like DNA-binding domain superfamily/Winged helix DNA-binding domain"/>
    <property type="match status" value="1"/>
</dbReference>
<dbReference type="HAMAP" id="MF_01407">
    <property type="entry name" value="ORC1_type_DNA_replic_protein"/>
    <property type="match status" value="1"/>
</dbReference>
<dbReference type="InterPro" id="IPR003593">
    <property type="entry name" value="AAA+_ATPase"/>
</dbReference>
<dbReference type="InterPro" id="IPR049945">
    <property type="entry name" value="AAA_22"/>
</dbReference>
<dbReference type="InterPro" id="IPR015163">
    <property type="entry name" value="Cdc6_C"/>
</dbReference>
<dbReference type="InterPro" id="IPR055237">
    <property type="entry name" value="Cdc6_lid"/>
</dbReference>
<dbReference type="InterPro" id="IPR050311">
    <property type="entry name" value="ORC1/CDC6"/>
</dbReference>
<dbReference type="InterPro" id="IPR014277">
    <property type="entry name" value="Orc1/Cdc6_arc"/>
</dbReference>
<dbReference type="InterPro" id="IPR027417">
    <property type="entry name" value="P-loop_NTPase"/>
</dbReference>
<dbReference type="InterPro" id="IPR036388">
    <property type="entry name" value="WH-like_DNA-bd_sf"/>
</dbReference>
<dbReference type="InterPro" id="IPR036390">
    <property type="entry name" value="WH_DNA-bd_sf"/>
</dbReference>
<dbReference type="NCBIfam" id="TIGR02928">
    <property type="entry name" value="orc1/cdc6 family replication initiation protein"/>
    <property type="match status" value="1"/>
</dbReference>
<dbReference type="NCBIfam" id="NF001625">
    <property type="entry name" value="PRK00411.1-3"/>
    <property type="match status" value="1"/>
</dbReference>
<dbReference type="PANTHER" id="PTHR10763">
    <property type="entry name" value="CELL DIVISION CONTROL PROTEIN 6-RELATED"/>
    <property type="match status" value="1"/>
</dbReference>
<dbReference type="PANTHER" id="PTHR10763:SF22">
    <property type="entry name" value="ORC1-TYPE DNA REPLICATION PROTEIN"/>
    <property type="match status" value="1"/>
</dbReference>
<dbReference type="Pfam" id="PF13401">
    <property type="entry name" value="AAA_22"/>
    <property type="match status" value="1"/>
</dbReference>
<dbReference type="Pfam" id="PF09079">
    <property type="entry name" value="Cdc6_C"/>
    <property type="match status" value="1"/>
</dbReference>
<dbReference type="Pfam" id="PF22703">
    <property type="entry name" value="Cdc6_lid"/>
    <property type="match status" value="1"/>
</dbReference>
<dbReference type="SMART" id="SM00382">
    <property type="entry name" value="AAA"/>
    <property type="match status" value="1"/>
</dbReference>
<dbReference type="SMART" id="SM01074">
    <property type="entry name" value="Cdc6_C"/>
    <property type="match status" value="1"/>
</dbReference>
<dbReference type="SUPFAM" id="SSF52540">
    <property type="entry name" value="P-loop containing nucleoside triphosphate hydrolases"/>
    <property type="match status" value="1"/>
</dbReference>
<dbReference type="SUPFAM" id="SSF46785">
    <property type="entry name" value="Winged helix' DNA-binding domain"/>
    <property type="match status" value="1"/>
</dbReference>
<name>CDC6_PYRHO</name>
<comment type="function">
    <text evidence="1">Involved in regulation of DNA replication.</text>
</comment>
<comment type="similarity">
    <text evidence="1">Belongs to the CDC6/cdc18 family.</text>
</comment>
<comment type="sequence caution" evidence="2">
    <conflict type="erroneous initiation">
        <sequence resource="EMBL-CDS" id="BAA29193"/>
    </conflict>
    <text>Extended N-terminus.</text>
</comment>
<keyword id="KW-0067">ATP-binding</keyword>
<keyword id="KW-0235">DNA replication</keyword>
<keyword id="KW-0547">Nucleotide-binding</keyword>
<organism>
    <name type="scientific">Pyrococcus horikoshii (strain ATCC 700860 / DSM 12428 / JCM 9974 / NBRC 100139 / OT-3)</name>
    <dbReference type="NCBI Taxonomy" id="70601"/>
    <lineage>
        <taxon>Archaea</taxon>
        <taxon>Methanobacteriati</taxon>
        <taxon>Methanobacteriota</taxon>
        <taxon>Thermococci</taxon>
        <taxon>Thermococcales</taxon>
        <taxon>Thermococcaceae</taxon>
        <taxon>Pyrococcus</taxon>
    </lineage>
</organism>
<protein>
    <recommendedName>
        <fullName evidence="1">ORC1-type DNA replication protein</fullName>
    </recommendedName>
</protein>
<sequence length="419" mass="48094">MNEGEQLHLDQLFEKLLKARKIFKNKEVLRHSYTPKDLPHRHEQIETLAQILVPVLKGETPSNIFVYGKTGTGKTVTVKFVTEELKKVSHKYNIPVDVIYINCEIVDTHYRVLANIVNHFKHETGIEVPLVGWPTDEVYAKLKQVIDMRERFVIIVLDEIDKLVKKSGDEVLYSLTRINTELKRAKVSVIGISNDLKFKEYLDPRVLSSLSEEEVVFPPYDANQLRDILMQRAEEAFYPGVLDDGVIPLCAALAAREHGDARKALDLLRVAGEIAEREGASKVTEKHVWKAQEKIEQDMMEEVIKTLPLQSKVLLYAIVLLDENGELPANTGEVYSVYRDLCEYLDLEPLTQRRISDLINELDMLGIINAKVVSKGRYGRTKEIRLNVTPYKIRNVFRYDYTIQPLLAISLKDSQRRLV</sequence>